<keyword id="KW-0040">ANK repeat</keyword>
<keyword id="KW-0378">Hydrolase</keyword>
<keyword id="KW-0442">Lipid degradation</keyword>
<keyword id="KW-0443">Lipid metabolism</keyword>
<keyword id="KW-1185">Reference proteome</keyword>
<keyword id="KW-0677">Repeat</keyword>
<protein>
    <recommendedName>
        <fullName>Intracellular phospholipase A2</fullName>
        <shortName>IPLA-2</shortName>
        <shortName>PLA(2)</shortName>
        <ecNumber evidence="1">3.1.1.4</ecNumber>
    </recommendedName>
    <alternativeName>
        <fullName evidence="7">Calcium-independent phospholipase A2</fullName>
    </alternativeName>
</protein>
<evidence type="ECO:0000250" key="1">
    <source>
        <dbReference type="UniProtKB" id="P97570"/>
    </source>
</evidence>
<evidence type="ECO:0000255" key="2"/>
<evidence type="ECO:0000255" key="3">
    <source>
        <dbReference type="PROSITE-ProRule" id="PRU00023"/>
    </source>
</evidence>
<evidence type="ECO:0000255" key="4">
    <source>
        <dbReference type="PROSITE-ProRule" id="PRU01161"/>
    </source>
</evidence>
<evidence type="ECO:0000256" key="5">
    <source>
        <dbReference type="SAM" id="MobiDB-lite"/>
    </source>
</evidence>
<evidence type="ECO:0000269" key="6">
    <source>
    </source>
</evidence>
<evidence type="ECO:0000303" key="7">
    <source>
    </source>
</evidence>
<evidence type="ECO:0000305" key="8"/>
<evidence type="ECO:0000312" key="9">
    <source>
        <dbReference type="EMBL" id="CAA90061.1"/>
    </source>
</evidence>
<evidence type="ECO:0000312" key="10">
    <source>
        <dbReference type="Proteomes" id="UP000001940"/>
    </source>
</evidence>
<evidence type="ECO:0000312" key="11">
    <source>
        <dbReference type="WormBase" id="F47A4.5"/>
    </source>
</evidence>
<sequence>MTTTNKDGPFRQQYLPGVHKEPNLAISESTHSSDWYSATSSEDCFQAASQSFSSQKSNGNVITQQPGKLHCEISDPKSCSFVPAISTDNAQMGTSGIIKYRSYSNPDLLVAMSPLAYRDEAPQSQKSVANSRQDLTQTSCEVVTVSETVVNADSITTTTVTSSTTTTATASQEDFIMVEAEQDETAGLCDATMPLVDKKNITTSSTTSSPSRQITPRIENGLSFENVVSLVKIFPAFVNKLLKKPWYASRCDEVCQFPKAELAYYDIVSTDVDDEHFVIVAGKVTTDEHLMDNQFHLVFAPVGFSEDVSLDERPFSLFRATDKKDLMDLLHLCDEKSFLFTSLDMSTMRADILRSKIEELVIQIRLKPHYHMIHVAIATDRLDFFSDGMIKTMNETLEPFESQLRCLCHTENCYPVHLALTMDRQKIVERLLELDPTLFCETDKAGNNVWHHVNSSFCAQIIWDRCPASQHFIDERNMDGQSPLNEAVSTAKPLVATFLIGKGAKFTRGDRNELFVAMTSKNAQSVVEVVLTDKPEIANERDALGNSAIHVALYKESLNALLNRKVELGLDIDVKNNAGETALLLFITTRKPDLLPLLVTLYAHGANMNATDPHGNTALHKSAALVDAKKISLECVKFLISAGSNPNKINLRGESPRHLAASLQNQEMLAILKAAGATRCPKGYKGCRSNCRHDCSSAEDEYEETLQKIRIGNESDYEKTEFTASEKLNIQDTLDGSRRGKKAKVNLISMDGGGIRGLVIIQTLIAIEERLGDDIFKYFDWSAGTSTGSLIMAGLATGKSLREMQQTYLLLKDRVFDGIMPPYDTVQLEKFIQDQFGTGTVWEIPYPRLMISAVNSEKLPVRLEMARNYKPAKDVAPETPKEMPLWMALRRSTAAPVLFKPSEDRYIDGGIISNNPALDLMSEVHAYNRELQLSGRKSDAVQMNVLVSFGTGQIPSTVIETLSIDSNSPLQSIKTIKNLAAMFIDQATASEGAPVARSRQWADSLEIPFFRFSAPLSKNIFLSSTSDLDVCTMMWDSFIYCRKHRDYIDELVKVLKHDTDHPHVKTPFTDL</sequence>
<feature type="chain" id="PRO_0000452652" description="Intracellular phospholipase A2">
    <location>
        <begin position="1"/>
        <end position="1071"/>
    </location>
</feature>
<feature type="repeat" description="ANK 2" evidence="2">
    <location>
        <begin position="411"/>
        <end position="440"/>
    </location>
</feature>
<feature type="repeat" description="ANK 3" evidence="2">
    <location>
        <begin position="479"/>
        <end position="508"/>
    </location>
</feature>
<feature type="repeat" description="ANK 4" evidence="2">
    <location>
        <begin position="510"/>
        <end position="539"/>
    </location>
</feature>
<feature type="repeat" description="ANK 5" evidence="2">
    <location>
        <begin position="544"/>
        <end position="570"/>
    </location>
</feature>
<feature type="repeat" description="ANK 6" evidence="2">
    <location>
        <begin position="578"/>
        <end position="610"/>
    </location>
</feature>
<feature type="repeat" description="ANK 1" evidence="3">
    <location>
        <begin position="614"/>
        <end position="651"/>
    </location>
</feature>
<feature type="repeat" description="ANK 7" evidence="2">
    <location>
        <begin position="652"/>
        <end position="681"/>
    </location>
</feature>
<feature type="domain" description="PNPLA" evidence="4">
    <location>
        <begin position="748"/>
        <end position="921"/>
    </location>
</feature>
<feature type="region of interest" description="Disordered" evidence="5">
    <location>
        <begin position="1"/>
        <end position="22"/>
    </location>
</feature>
<feature type="short sequence motif" description="GXGXXG" evidence="4">
    <location>
        <begin position="752"/>
        <end position="757"/>
    </location>
</feature>
<feature type="short sequence motif" description="GXSXG" evidence="4">
    <location>
        <begin position="784"/>
        <end position="788"/>
    </location>
</feature>
<feature type="short sequence motif" description="DGA/G" evidence="4">
    <location>
        <begin position="908"/>
        <end position="910"/>
    </location>
</feature>
<feature type="active site" description="Nucleophile" evidence="4">
    <location>
        <position position="786"/>
    </location>
</feature>
<feature type="active site" description="Proton acceptor" evidence="4">
    <location>
        <position position="908"/>
    </location>
</feature>
<organism>
    <name type="scientific">Caenorhabditis elegans</name>
    <dbReference type="NCBI Taxonomy" id="6239"/>
    <lineage>
        <taxon>Eukaryota</taxon>
        <taxon>Metazoa</taxon>
        <taxon>Ecdysozoa</taxon>
        <taxon>Nematoda</taxon>
        <taxon>Chromadorea</taxon>
        <taxon>Rhabditida</taxon>
        <taxon>Rhabditina</taxon>
        <taxon>Rhabditomorpha</taxon>
        <taxon>Rhabditoidea</taxon>
        <taxon>Rhabditidae</taxon>
        <taxon>Peloderinae</taxon>
        <taxon>Caenorhabditis</taxon>
    </lineage>
</organism>
<comment type="function">
    <text evidence="6">Phospholipase that plays a critical role during oogenesis, ovulation, and/or embryogenesis.</text>
</comment>
<comment type="catalytic activity">
    <reaction evidence="1">
        <text>a 1,2-diacyl-sn-glycero-3-phosphocholine + H2O = a 1-acyl-sn-glycero-3-phosphocholine + a fatty acid + H(+)</text>
        <dbReference type="Rhea" id="RHEA:15801"/>
        <dbReference type="ChEBI" id="CHEBI:15377"/>
        <dbReference type="ChEBI" id="CHEBI:15378"/>
        <dbReference type="ChEBI" id="CHEBI:28868"/>
        <dbReference type="ChEBI" id="CHEBI:57643"/>
        <dbReference type="ChEBI" id="CHEBI:58168"/>
        <dbReference type="EC" id="3.1.1.4"/>
    </reaction>
    <physiologicalReaction direction="left-to-right" evidence="1">
        <dbReference type="Rhea" id="RHEA:15802"/>
    </physiologicalReaction>
</comment>
<comment type="disruption phenotype">
    <text evidence="6">Mutant animals generate fewer progeny and slower larval development.</text>
</comment>
<comment type="similarity">
    <text evidence="8">Belongs to the patatin family.</text>
</comment>
<proteinExistence type="inferred from homology"/>
<reference key="1">
    <citation type="journal article" date="1998" name="Science">
        <title>Genome sequence of the nematode C. elegans: a platform for investigating biology.</title>
        <authorList>
            <consortium name="The C. elegans sequencing consortium"/>
        </authorList>
    </citation>
    <scope>NUCLEOTIDE SEQUENCE [LARGE SCALE GENOMIC DNA]</scope>
    <source>
        <strain evidence="9 10">Bristol N2</strain>
    </source>
</reference>
<reference key="2">
    <citation type="journal article" date="2012" name="J. Biol. Chem.">
        <title>Roles of acidic phospholipids and nucleotides in regulating membrane binding and activity of a calcium-independent phospholipase A2 isoform.</title>
        <authorList>
            <person name="Morrison K."/>
            <person name="Witte K."/>
            <person name="Mayers J.R."/>
            <person name="Schuh A.L."/>
            <person name="Audhya A."/>
        </authorList>
    </citation>
    <scope>FUNCTION</scope>
    <scope>DISRUPTION PHENOTYPE</scope>
</reference>
<accession>Q20500</accession>
<name>PLA2_CAEEL</name>
<dbReference type="EC" id="3.1.1.4" evidence="1"/>
<dbReference type="EMBL" id="BX284606">
    <property type="protein sequence ID" value="CAA90061.1"/>
    <property type="molecule type" value="Genomic_DNA"/>
</dbReference>
<dbReference type="PIR" id="T22327">
    <property type="entry name" value="T22327"/>
</dbReference>
<dbReference type="RefSeq" id="NP_509647.1">
    <property type="nucleotide sequence ID" value="NM_077246.7"/>
</dbReference>
<dbReference type="SMR" id="Q20500"/>
<dbReference type="FunCoup" id="Q20500">
    <property type="interactions" value="1394"/>
</dbReference>
<dbReference type="STRING" id="6239.F47A4.5.1"/>
<dbReference type="PaxDb" id="6239-F47A4.5"/>
<dbReference type="PeptideAtlas" id="Q20500"/>
<dbReference type="EnsemblMetazoa" id="F47A4.5.1">
    <property type="protein sequence ID" value="F47A4.5.1"/>
    <property type="gene ID" value="WBGene00009801"/>
</dbReference>
<dbReference type="GeneID" id="181196"/>
<dbReference type="KEGG" id="cel:CELE_F47A4.5"/>
<dbReference type="UCSC" id="F47A4.5">
    <property type="organism name" value="c. elegans"/>
</dbReference>
<dbReference type="AGR" id="WB:WBGene00009801"/>
<dbReference type="CTD" id="181196"/>
<dbReference type="WormBase" id="F47A4.5">
    <property type="protein sequence ID" value="CE02248"/>
    <property type="gene ID" value="WBGene00009801"/>
    <property type="gene designation" value="ipla-2"/>
</dbReference>
<dbReference type="eggNOG" id="KOG0513">
    <property type="taxonomic scope" value="Eukaryota"/>
</dbReference>
<dbReference type="HOGENOM" id="CLU_287465_0_0_1"/>
<dbReference type="InParanoid" id="Q20500"/>
<dbReference type="OrthoDB" id="10021675at2759"/>
<dbReference type="PhylomeDB" id="Q20500"/>
<dbReference type="PRO" id="PR:Q20500"/>
<dbReference type="Proteomes" id="UP000001940">
    <property type="component" value="Chromosome X"/>
</dbReference>
<dbReference type="Bgee" id="WBGene00009801">
    <property type="expression patterns" value="Expressed in pharyngeal muscle cell (C elegans) and 4 other cell types or tissues"/>
</dbReference>
<dbReference type="GO" id="GO:0005737">
    <property type="term" value="C:cytoplasm"/>
    <property type="evidence" value="ECO:0000314"/>
    <property type="project" value="WormBase"/>
</dbReference>
<dbReference type="GO" id="GO:0051015">
    <property type="term" value="F:actin filament binding"/>
    <property type="evidence" value="ECO:0000318"/>
    <property type="project" value="GO_Central"/>
</dbReference>
<dbReference type="GO" id="GO:0047499">
    <property type="term" value="F:calcium-independent phospholipase A2 activity"/>
    <property type="evidence" value="ECO:0007669"/>
    <property type="project" value="InterPro"/>
</dbReference>
<dbReference type="GO" id="GO:0051017">
    <property type="term" value="P:actin filament bundle assembly"/>
    <property type="evidence" value="ECO:0000318"/>
    <property type="project" value="GO_Central"/>
</dbReference>
<dbReference type="GO" id="GO:0044258">
    <property type="term" value="P:intestinal lipid catabolic process"/>
    <property type="evidence" value="ECO:0000315"/>
    <property type="project" value="WormBase"/>
</dbReference>
<dbReference type="GO" id="GO:0042594">
    <property type="term" value="P:response to starvation"/>
    <property type="evidence" value="ECO:0000270"/>
    <property type="project" value="WormBase"/>
</dbReference>
<dbReference type="CDD" id="cd07212">
    <property type="entry name" value="Pat_PNPLA9"/>
    <property type="match status" value="1"/>
</dbReference>
<dbReference type="FunFam" id="1.25.40.20:FF:000708">
    <property type="entry name" value="Intracelllar PhosphoLipase A family"/>
    <property type="match status" value="1"/>
</dbReference>
<dbReference type="FunFam" id="3.40.1090.10:FF:000059">
    <property type="entry name" value="Intracelllar PhosphoLipase A family"/>
    <property type="match status" value="1"/>
</dbReference>
<dbReference type="Gene3D" id="1.25.40.20">
    <property type="entry name" value="Ankyrin repeat-containing domain"/>
    <property type="match status" value="2"/>
</dbReference>
<dbReference type="Gene3D" id="3.40.1090.10">
    <property type="entry name" value="Cytosolic phospholipase A2 catalytic domain"/>
    <property type="match status" value="1"/>
</dbReference>
<dbReference type="InterPro" id="IPR016035">
    <property type="entry name" value="Acyl_Trfase/lysoPLipase"/>
</dbReference>
<dbReference type="InterPro" id="IPR002110">
    <property type="entry name" value="Ankyrin_rpt"/>
</dbReference>
<dbReference type="InterPro" id="IPR036770">
    <property type="entry name" value="Ankyrin_rpt-contain_sf"/>
</dbReference>
<dbReference type="InterPro" id="IPR047148">
    <property type="entry name" value="PLPL9"/>
</dbReference>
<dbReference type="InterPro" id="IPR002641">
    <property type="entry name" value="PNPLA_dom"/>
</dbReference>
<dbReference type="PANTHER" id="PTHR24139:SF34">
    <property type="entry name" value="85_88 KDA CALCIUM-INDEPENDENT PHOSPHOLIPASE A2"/>
    <property type="match status" value="1"/>
</dbReference>
<dbReference type="PANTHER" id="PTHR24139">
    <property type="entry name" value="CALCIUM-INDEPENDENT PHOSPHOLIPASE A2"/>
    <property type="match status" value="1"/>
</dbReference>
<dbReference type="Pfam" id="PF00023">
    <property type="entry name" value="Ank"/>
    <property type="match status" value="1"/>
</dbReference>
<dbReference type="Pfam" id="PF01734">
    <property type="entry name" value="Patatin"/>
    <property type="match status" value="1"/>
</dbReference>
<dbReference type="SMART" id="SM00248">
    <property type="entry name" value="ANK"/>
    <property type="match status" value="6"/>
</dbReference>
<dbReference type="SUPFAM" id="SSF48403">
    <property type="entry name" value="Ankyrin repeat"/>
    <property type="match status" value="1"/>
</dbReference>
<dbReference type="SUPFAM" id="SSF52151">
    <property type="entry name" value="FabD/lysophospholipase-like"/>
    <property type="match status" value="1"/>
</dbReference>
<dbReference type="PROSITE" id="PS50297">
    <property type="entry name" value="ANK_REP_REGION"/>
    <property type="match status" value="1"/>
</dbReference>
<dbReference type="PROSITE" id="PS50088">
    <property type="entry name" value="ANK_REPEAT"/>
    <property type="match status" value="3"/>
</dbReference>
<dbReference type="PROSITE" id="PS51635">
    <property type="entry name" value="PNPLA"/>
    <property type="match status" value="1"/>
</dbReference>
<gene>
    <name evidence="9 11" type="primary">ipla-2</name>
    <name evidence="11" type="ORF">F47A4.5</name>
</gene>